<feature type="signal peptide" evidence="1">
    <location>
        <begin position="1"/>
        <end position="31"/>
    </location>
</feature>
<feature type="propeptide" id="PRO_0000446066" evidence="1">
    <location>
        <begin position="32"/>
        <end position="68"/>
    </location>
</feature>
<feature type="peptide" id="PRO_0000250513" description="Augurin">
    <location>
        <begin position="71"/>
        <end position="131"/>
    </location>
</feature>
<feature type="propeptide" id="PRO_0000363236" evidence="3">
    <location>
        <begin position="132"/>
        <end position="147"/>
    </location>
</feature>
<evidence type="ECO:0000250" key="1">
    <source>
        <dbReference type="UniProtKB" id="D4A540"/>
    </source>
</evidence>
<evidence type="ECO:0000250" key="2">
    <source>
        <dbReference type="UniProtKB" id="Q9H1Z8"/>
    </source>
</evidence>
<evidence type="ECO:0000255" key="3"/>
<evidence type="ECO:0000305" key="4"/>
<accession>Q32KM8</accession>
<keyword id="KW-1003">Cell membrane</keyword>
<keyword id="KW-0165">Cleavage on pair of basic residues</keyword>
<keyword id="KW-0963">Cytoplasm</keyword>
<keyword id="KW-0472">Membrane</keyword>
<keyword id="KW-1185">Reference proteome</keyword>
<keyword id="KW-0964">Secreted</keyword>
<keyword id="KW-0732">Signal</keyword>
<organism>
    <name type="scientific">Bos taurus</name>
    <name type="common">Bovine</name>
    <dbReference type="NCBI Taxonomy" id="9913"/>
    <lineage>
        <taxon>Eukaryota</taxon>
        <taxon>Metazoa</taxon>
        <taxon>Chordata</taxon>
        <taxon>Craniata</taxon>
        <taxon>Vertebrata</taxon>
        <taxon>Euteleostomi</taxon>
        <taxon>Mammalia</taxon>
        <taxon>Eutheria</taxon>
        <taxon>Laurasiatheria</taxon>
        <taxon>Artiodactyla</taxon>
        <taxon>Ruminantia</taxon>
        <taxon>Pecora</taxon>
        <taxon>Bovidae</taxon>
        <taxon>Bovinae</taxon>
        <taxon>Bos</taxon>
    </lineage>
</organism>
<proteinExistence type="evidence at transcript level"/>
<comment type="function">
    <text evidence="1">Probable hormone that may attenuate cell proliferation and induce senescence of oligodendrocyte and neural precursor cells in the central nervous system (By similarity). ECRG4-induced senescence is characterized by G1 arrest, RB1 dephosphorylation and accelerated CCND1 and CCND3 proteasomal degradation (By similarity).</text>
</comment>
<comment type="subcellular location">
    <subcellularLocation>
        <location evidence="2">Secreted</location>
    </subcellularLocation>
    <subcellularLocation>
        <location evidence="2">Cytoplasm</location>
    </subcellularLocation>
    <subcellularLocation>
        <location evidence="2">Apical cell membrane</location>
    </subcellularLocation>
</comment>
<comment type="similarity">
    <text evidence="4">Belongs to the augurin family.</text>
</comment>
<name>AUGN_BOVIN</name>
<protein>
    <recommendedName>
        <fullName evidence="4">Augurin</fullName>
    </recommendedName>
</protein>
<sequence>MANSSARPAFLVMTALALLLLLCVGPGGISGNKLKLLLRKREAPAPTMTPVAVQESRAKEFLSSLRRPKRQLWDRSRPEVQQWYQHFLYLGFDEAKFEDDISYWLNRNRNGHDYYDYYQRHYDEDSAIGPRSAHSFRHGASVNYDDY</sequence>
<reference key="1">
    <citation type="submission" date="2005-11" db="EMBL/GenBank/DDBJ databases">
        <authorList>
            <consortium name="NIH - Mammalian Gene Collection (MGC) project"/>
        </authorList>
    </citation>
    <scope>NUCLEOTIDE SEQUENCE [LARGE SCALE MRNA]</scope>
    <source>
        <strain>Crossbred X Angus</strain>
        <tissue>Liver</tissue>
    </source>
</reference>
<gene>
    <name evidence="4" type="primary">ECRG4</name>
</gene>
<dbReference type="EMBL" id="BC110018">
    <property type="protein sequence ID" value="AAI10019.1"/>
    <property type="molecule type" value="mRNA"/>
</dbReference>
<dbReference type="RefSeq" id="NP_001033202.1">
    <property type="nucleotide sequence ID" value="NM_001038113.2"/>
</dbReference>
<dbReference type="SMR" id="Q32KM8"/>
<dbReference type="FunCoup" id="Q32KM8">
    <property type="interactions" value="76"/>
</dbReference>
<dbReference type="STRING" id="9913.ENSBTAP00000016771"/>
<dbReference type="PaxDb" id="9913-ENSBTAP00000016771"/>
<dbReference type="GeneID" id="515133"/>
<dbReference type="KEGG" id="bta:515133"/>
<dbReference type="CTD" id="84417"/>
<dbReference type="eggNOG" id="ENOG502RZPP">
    <property type="taxonomic scope" value="Eukaryota"/>
</dbReference>
<dbReference type="InParanoid" id="Q32KM8"/>
<dbReference type="OrthoDB" id="8915498at2759"/>
<dbReference type="Proteomes" id="UP000009136">
    <property type="component" value="Unplaced"/>
</dbReference>
<dbReference type="GO" id="GO:0016324">
    <property type="term" value="C:apical plasma membrane"/>
    <property type="evidence" value="ECO:0000250"/>
    <property type="project" value="UniProtKB"/>
</dbReference>
<dbReference type="GO" id="GO:0005737">
    <property type="term" value="C:cytoplasm"/>
    <property type="evidence" value="ECO:0000250"/>
    <property type="project" value="UniProtKB"/>
</dbReference>
<dbReference type="GO" id="GO:0005615">
    <property type="term" value="C:extracellular space"/>
    <property type="evidence" value="ECO:0000250"/>
    <property type="project" value="UniProtKB"/>
</dbReference>
<dbReference type="GO" id="GO:0031145">
    <property type="term" value="P:anaphase-promoting complex-dependent catabolic process"/>
    <property type="evidence" value="ECO:0000318"/>
    <property type="project" value="GO_Central"/>
</dbReference>
<dbReference type="GO" id="GO:0090398">
    <property type="term" value="P:cellular senescence"/>
    <property type="evidence" value="ECO:0000318"/>
    <property type="project" value="GO_Central"/>
</dbReference>
<dbReference type="GO" id="GO:0007417">
    <property type="term" value="P:central nervous system development"/>
    <property type="evidence" value="ECO:0000250"/>
    <property type="project" value="UniProtKB"/>
</dbReference>
<dbReference type="GO" id="GO:0070314">
    <property type="term" value="P:G1 to G0 transition"/>
    <property type="evidence" value="ECO:0000318"/>
    <property type="project" value="GO_Central"/>
</dbReference>
<dbReference type="GO" id="GO:0008285">
    <property type="term" value="P:negative regulation of cell population proliferation"/>
    <property type="evidence" value="ECO:0000250"/>
    <property type="project" value="UniProtKB"/>
</dbReference>
<dbReference type="GO" id="GO:0042127">
    <property type="term" value="P:regulation of cell population proliferation"/>
    <property type="evidence" value="ECO:0000318"/>
    <property type="project" value="GO_Central"/>
</dbReference>
<dbReference type="GO" id="GO:0009611">
    <property type="term" value="P:response to wounding"/>
    <property type="evidence" value="ECO:0000250"/>
    <property type="project" value="UniProtKB"/>
</dbReference>
<dbReference type="InterPro" id="IPR028173">
    <property type="entry name" value="Augurin"/>
</dbReference>
<dbReference type="PANTHER" id="PTHR31613">
    <property type="entry name" value="AUGURIN"/>
    <property type="match status" value="1"/>
</dbReference>
<dbReference type="PANTHER" id="PTHR31613:SF2">
    <property type="entry name" value="AUGURIN"/>
    <property type="match status" value="1"/>
</dbReference>
<dbReference type="Pfam" id="PF15187">
    <property type="entry name" value="Augurin"/>
    <property type="match status" value="1"/>
</dbReference>